<comment type="function">
    <text evidence="1">Provides the (R)-glutamate required for cell wall biosynthesis.</text>
</comment>
<comment type="catalytic activity">
    <reaction evidence="1">
        <text>L-glutamate = D-glutamate</text>
        <dbReference type="Rhea" id="RHEA:12813"/>
        <dbReference type="ChEBI" id="CHEBI:29985"/>
        <dbReference type="ChEBI" id="CHEBI:29986"/>
        <dbReference type="EC" id="5.1.1.3"/>
    </reaction>
</comment>
<comment type="pathway">
    <text evidence="1">Cell wall biogenesis; peptidoglycan biosynthesis.</text>
</comment>
<comment type="similarity">
    <text evidence="1">Belongs to the aspartate/glutamate racemases family.</text>
</comment>
<proteinExistence type="inferred from homology"/>
<organism>
    <name type="scientific">Mycobacterium tuberculosis (strain ATCC 25177 / H37Ra)</name>
    <dbReference type="NCBI Taxonomy" id="419947"/>
    <lineage>
        <taxon>Bacteria</taxon>
        <taxon>Bacillati</taxon>
        <taxon>Actinomycetota</taxon>
        <taxon>Actinomycetes</taxon>
        <taxon>Mycobacteriales</taxon>
        <taxon>Mycobacteriaceae</taxon>
        <taxon>Mycobacterium</taxon>
        <taxon>Mycobacterium tuberculosis complex</taxon>
    </lineage>
</organism>
<sequence length="271" mass="28643">MNSPLAPVGVFDSGVGGLTVARAIIDQLPDEDIVYVGDTGNGPYGPLTIPEIRAHALAIGDDLVGRGVKALVIACNSASSACLRDARERYQVPVVEVILPAVRRAVAATRNGRIGVIGTRATITSHAYQDAFAAARDTEITAVACPRFVDFVERGVTSGRQVLGLAQGYLEPLQRAEVDTLVLGCTHYPLLSGLIQLAMGENVTLVSSAEETAKEVVRVLTEIDLLRPHDAPPATRIFEATGDPEAFTKLAARFLGPVLGGVQPVHPSRIH</sequence>
<dbReference type="EC" id="5.1.1.3" evidence="1"/>
<dbReference type="EMBL" id="CP000611">
    <property type="protein sequence ID" value="ABQ73088.1"/>
    <property type="molecule type" value="Genomic_DNA"/>
</dbReference>
<dbReference type="RefSeq" id="WP_003406919.1">
    <property type="nucleotide sequence ID" value="NZ_CP016972.1"/>
</dbReference>
<dbReference type="SMR" id="A5U238"/>
<dbReference type="KEGG" id="mra:MRA_1346"/>
<dbReference type="eggNOG" id="COG0796">
    <property type="taxonomic scope" value="Bacteria"/>
</dbReference>
<dbReference type="HOGENOM" id="CLU_052344_0_1_11"/>
<dbReference type="UniPathway" id="UPA00219"/>
<dbReference type="Proteomes" id="UP000001988">
    <property type="component" value="Chromosome"/>
</dbReference>
<dbReference type="GO" id="GO:0008881">
    <property type="term" value="F:glutamate racemase activity"/>
    <property type="evidence" value="ECO:0007669"/>
    <property type="project" value="UniProtKB-UniRule"/>
</dbReference>
<dbReference type="GO" id="GO:0071555">
    <property type="term" value="P:cell wall organization"/>
    <property type="evidence" value="ECO:0007669"/>
    <property type="project" value="UniProtKB-KW"/>
</dbReference>
<dbReference type="GO" id="GO:0009252">
    <property type="term" value="P:peptidoglycan biosynthetic process"/>
    <property type="evidence" value="ECO:0007669"/>
    <property type="project" value="UniProtKB-UniRule"/>
</dbReference>
<dbReference type="GO" id="GO:0008360">
    <property type="term" value="P:regulation of cell shape"/>
    <property type="evidence" value="ECO:0007669"/>
    <property type="project" value="UniProtKB-KW"/>
</dbReference>
<dbReference type="FunFam" id="3.40.50.1860:FF:000001">
    <property type="entry name" value="Glutamate racemase"/>
    <property type="match status" value="1"/>
</dbReference>
<dbReference type="Gene3D" id="3.40.50.1860">
    <property type="match status" value="2"/>
</dbReference>
<dbReference type="HAMAP" id="MF_00258">
    <property type="entry name" value="Glu_racemase"/>
    <property type="match status" value="1"/>
</dbReference>
<dbReference type="InterPro" id="IPR015942">
    <property type="entry name" value="Asp/Glu/hydantoin_racemase"/>
</dbReference>
<dbReference type="InterPro" id="IPR001920">
    <property type="entry name" value="Asp/Glu_race"/>
</dbReference>
<dbReference type="InterPro" id="IPR018187">
    <property type="entry name" value="Asp/Glu_racemase_AS_1"/>
</dbReference>
<dbReference type="InterPro" id="IPR033134">
    <property type="entry name" value="Asp/Glu_racemase_AS_2"/>
</dbReference>
<dbReference type="InterPro" id="IPR004391">
    <property type="entry name" value="Glu_race"/>
</dbReference>
<dbReference type="NCBIfam" id="TIGR00067">
    <property type="entry name" value="glut_race"/>
    <property type="match status" value="1"/>
</dbReference>
<dbReference type="PANTHER" id="PTHR21198">
    <property type="entry name" value="GLUTAMATE RACEMASE"/>
    <property type="match status" value="1"/>
</dbReference>
<dbReference type="PANTHER" id="PTHR21198:SF2">
    <property type="entry name" value="GLUTAMATE RACEMASE"/>
    <property type="match status" value="1"/>
</dbReference>
<dbReference type="Pfam" id="PF01177">
    <property type="entry name" value="Asp_Glu_race"/>
    <property type="match status" value="1"/>
</dbReference>
<dbReference type="SUPFAM" id="SSF53681">
    <property type="entry name" value="Aspartate/glutamate racemase"/>
    <property type="match status" value="2"/>
</dbReference>
<dbReference type="PROSITE" id="PS00923">
    <property type="entry name" value="ASP_GLU_RACEMASE_1"/>
    <property type="match status" value="1"/>
</dbReference>
<dbReference type="PROSITE" id="PS00924">
    <property type="entry name" value="ASP_GLU_RACEMASE_2"/>
    <property type="match status" value="1"/>
</dbReference>
<evidence type="ECO:0000255" key="1">
    <source>
        <dbReference type="HAMAP-Rule" id="MF_00258"/>
    </source>
</evidence>
<feature type="chain" id="PRO_1000047587" description="Glutamate racemase">
    <location>
        <begin position="1"/>
        <end position="271"/>
    </location>
</feature>
<feature type="active site" description="Proton donor/acceptor" evidence="1">
    <location>
        <position position="75"/>
    </location>
</feature>
<feature type="active site" description="Proton donor/acceptor" evidence="1">
    <location>
        <position position="185"/>
    </location>
</feature>
<feature type="binding site" evidence="1">
    <location>
        <begin position="12"/>
        <end position="13"/>
    </location>
    <ligand>
        <name>substrate</name>
    </ligand>
</feature>
<feature type="binding site" evidence="1">
    <location>
        <begin position="44"/>
        <end position="45"/>
    </location>
    <ligand>
        <name>substrate</name>
    </ligand>
</feature>
<feature type="binding site" evidence="1">
    <location>
        <begin position="76"/>
        <end position="77"/>
    </location>
    <ligand>
        <name>substrate</name>
    </ligand>
</feature>
<feature type="binding site" evidence="1">
    <location>
        <begin position="186"/>
        <end position="187"/>
    </location>
    <ligand>
        <name>substrate</name>
    </ligand>
</feature>
<keyword id="KW-0133">Cell shape</keyword>
<keyword id="KW-0961">Cell wall biogenesis/degradation</keyword>
<keyword id="KW-0413">Isomerase</keyword>
<keyword id="KW-0573">Peptidoglycan synthesis</keyword>
<keyword id="KW-1185">Reference proteome</keyword>
<reference key="1">
    <citation type="journal article" date="2008" name="PLoS ONE">
        <title>Genetic basis of virulence attenuation revealed by comparative genomic analysis of Mycobacterium tuberculosis strain H37Ra versus H37Rv.</title>
        <authorList>
            <person name="Zheng H."/>
            <person name="Lu L."/>
            <person name="Wang B."/>
            <person name="Pu S."/>
            <person name="Zhang X."/>
            <person name="Zhu G."/>
            <person name="Shi W."/>
            <person name="Zhang L."/>
            <person name="Wang H."/>
            <person name="Wang S."/>
            <person name="Zhao G."/>
            <person name="Zhang Y."/>
        </authorList>
    </citation>
    <scope>NUCLEOTIDE SEQUENCE [LARGE SCALE GENOMIC DNA]</scope>
    <source>
        <strain>ATCC 25177 / H37Ra</strain>
    </source>
</reference>
<accession>A5U238</accession>
<gene>
    <name evidence="1" type="primary">murI</name>
    <name type="ordered locus">MRA_1346</name>
</gene>
<name>MURI_MYCTA</name>
<protein>
    <recommendedName>
        <fullName evidence="1">Glutamate racemase</fullName>
        <ecNumber evidence="1">5.1.1.3</ecNumber>
    </recommendedName>
</protein>